<accession>Q6ZK57</accession>
<feature type="chain" id="PRO_0000346847" description="Zinc finger CCCH domain-containing protein 54">
    <location>
        <begin position="1"/>
        <end position="653"/>
    </location>
</feature>
<feature type="domain" description="HTH OST-type" evidence="4">
    <location>
        <begin position="313"/>
        <end position="396"/>
    </location>
</feature>
<feature type="domain" description="RRM" evidence="2">
    <location>
        <begin position="422"/>
        <end position="497"/>
    </location>
</feature>
<feature type="zinc finger region" description="C3H1-type" evidence="3">
    <location>
        <begin position="260"/>
        <end position="287"/>
    </location>
</feature>
<feature type="region of interest" description="Disordered" evidence="5">
    <location>
        <begin position="242"/>
        <end position="261"/>
    </location>
</feature>
<feature type="region of interest" description="Disordered" evidence="5">
    <location>
        <begin position="598"/>
        <end position="623"/>
    </location>
</feature>
<feature type="coiled-coil region" evidence="1">
    <location>
        <begin position="537"/>
        <end position="565"/>
    </location>
</feature>
<feature type="compositionally biased region" description="Polar residues" evidence="5">
    <location>
        <begin position="609"/>
        <end position="620"/>
    </location>
</feature>
<feature type="splice variant" id="VSP_035022" description="In isoform 2." evidence="6">
    <location>
        <begin position="1"/>
        <end position="49"/>
    </location>
</feature>
<feature type="sequence conflict" description="In Ref. 5; AK111902." evidence="7" ref="5">
    <original>E</original>
    <variation>K</variation>
    <location>
        <position position="54"/>
    </location>
</feature>
<name>C3H54_ORYSJ</name>
<protein>
    <recommendedName>
        <fullName>Zinc finger CCCH domain-containing protein 54</fullName>
        <shortName>OsC3H54</shortName>
    </recommendedName>
</protein>
<organism>
    <name type="scientific">Oryza sativa subsp. japonica</name>
    <name type="common">Rice</name>
    <dbReference type="NCBI Taxonomy" id="39947"/>
    <lineage>
        <taxon>Eukaryota</taxon>
        <taxon>Viridiplantae</taxon>
        <taxon>Streptophyta</taxon>
        <taxon>Embryophyta</taxon>
        <taxon>Tracheophyta</taxon>
        <taxon>Spermatophyta</taxon>
        <taxon>Magnoliopsida</taxon>
        <taxon>Liliopsida</taxon>
        <taxon>Poales</taxon>
        <taxon>Poaceae</taxon>
        <taxon>BOP clade</taxon>
        <taxon>Oryzoideae</taxon>
        <taxon>Oryzeae</taxon>
        <taxon>Oryzinae</taxon>
        <taxon>Oryza</taxon>
        <taxon>Oryza sativa</taxon>
    </lineage>
</organism>
<reference key="1">
    <citation type="journal article" date="2005" name="Nature">
        <title>The map-based sequence of the rice genome.</title>
        <authorList>
            <consortium name="International rice genome sequencing project (IRGSP)"/>
        </authorList>
    </citation>
    <scope>NUCLEOTIDE SEQUENCE [LARGE SCALE GENOMIC DNA]</scope>
    <source>
        <strain>cv. Nipponbare</strain>
    </source>
</reference>
<reference key="2">
    <citation type="journal article" date="2008" name="Nucleic Acids Res.">
        <title>The rice annotation project database (RAP-DB): 2008 update.</title>
        <authorList>
            <consortium name="The rice annotation project (RAP)"/>
        </authorList>
    </citation>
    <scope>GENOME REANNOTATION</scope>
    <source>
        <strain>cv. Nipponbare</strain>
    </source>
</reference>
<reference key="3">
    <citation type="journal article" date="2013" name="Rice">
        <title>Improvement of the Oryza sativa Nipponbare reference genome using next generation sequence and optical map data.</title>
        <authorList>
            <person name="Kawahara Y."/>
            <person name="de la Bastide M."/>
            <person name="Hamilton J.P."/>
            <person name="Kanamori H."/>
            <person name="McCombie W.R."/>
            <person name="Ouyang S."/>
            <person name="Schwartz D.C."/>
            <person name="Tanaka T."/>
            <person name="Wu J."/>
            <person name="Zhou S."/>
            <person name="Childs K.L."/>
            <person name="Davidson R.M."/>
            <person name="Lin H."/>
            <person name="Quesada-Ocampo L."/>
            <person name="Vaillancourt B."/>
            <person name="Sakai H."/>
            <person name="Lee S.S."/>
            <person name="Kim J."/>
            <person name="Numa H."/>
            <person name="Itoh T."/>
            <person name="Buell C.R."/>
            <person name="Matsumoto T."/>
        </authorList>
    </citation>
    <scope>GENOME REANNOTATION</scope>
    <source>
        <strain>cv. Nipponbare</strain>
    </source>
</reference>
<reference key="4">
    <citation type="journal article" date="2005" name="PLoS Biol.">
        <title>The genomes of Oryza sativa: a history of duplications.</title>
        <authorList>
            <person name="Yu J."/>
            <person name="Wang J."/>
            <person name="Lin W."/>
            <person name="Li S."/>
            <person name="Li H."/>
            <person name="Zhou J."/>
            <person name="Ni P."/>
            <person name="Dong W."/>
            <person name="Hu S."/>
            <person name="Zeng C."/>
            <person name="Zhang J."/>
            <person name="Zhang Y."/>
            <person name="Li R."/>
            <person name="Xu Z."/>
            <person name="Li S."/>
            <person name="Li X."/>
            <person name="Zheng H."/>
            <person name="Cong L."/>
            <person name="Lin L."/>
            <person name="Yin J."/>
            <person name="Geng J."/>
            <person name="Li G."/>
            <person name="Shi J."/>
            <person name="Liu J."/>
            <person name="Lv H."/>
            <person name="Li J."/>
            <person name="Wang J."/>
            <person name="Deng Y."/>
            <person name="Ran L."/>
            <person name="Shi X."/>
            <person name="Wang X."/>
            <person name="Wu Q."/>
            <person name="Li C."/>
            <person name="Ren X."/>
            <person name="Wang J."/>
            <person name="Wang X."/>
            <person name="Li D."/>
            <person name="Liu D."/>
            <person name="Zhang X."/>
            <person name="Ji Z."/>
            <person name="Zhao W."/>
            <person name="Sun Y."/>
            <person name="Zhang Z."/>
            <person name="Bao J."/>
            <person name="Han Y."/>
            <person name="Dong L."/>
            <person name="Ji J."/>
            <person name="Chen P."/>
            <person name="Wu S."/>
            <person name="Liu J."/>
            <person name="Xiao Y."/>
            <person name="Bu D."/>
            <person name="Tan J."/>
            <person name="Yang L."/>
            <person name="Ye C."/>
            <person name="Zhang J."/>
            <person name="Xu J."/>
            <person name="Zhou Y."/>
            <person name="Yu Y."/>
            <person name="Zhang B."/>
            <person name="Zhuang S."/>
            <person name="Wei H."/>
            <person name="Liu B."/>
            <person name="Lei M."/>
            <person name="Yu H."/>
            <person name="Li Y."/>
            <person name="Xu H."/>
            <person name="Wei S."/>
            <person name="He X."/>
            <person name="Fang L."/>
            <person name="Zhang Z."/>
            <person name="Zhang Y."/>
            <person name="Huang X."/>
            <person name="Su Z."/>
            <person name="Tong W."/>
            <person name="Li J."/>
            <person name="Tong Z."/>
            <person name="Li S."/>
            <person name="Ye J."/>
            <person name="Wang L."/>
            <person name="Fang L."/>
            <person name="Lei T."/>
            <person name="Chen C.-S."/>
            <person name="Chen H.-C."/>
            <person name="Xu Z."/>
            <person name="Li H."/>
            <person name="Huang H."/>
            <person name="Zhang F."/>
            <person name="Xu H."/>
            <person name="Li N."/>
            <person name="Zhao C."/>
            <person name="Li S."/>
            <person name="Dong L."/>
            <person name="Huang Y."/>
            <person name="Li L."/>
            <person name="Xi Y."/>
            <person name="Qi Q."/>
            <person name="Li W."/>
            <person name="Zhang B."/>
            <person name="Hu W."/>
            <person name="Zhang Y."/>
            <person name="Tian X."/>
            <person name="Jiao Y."/>
            <person name="Liang X."/>
            <person name="Jin J."/>
            <person name="Gao L."/>
            <person name="Zheng W."/>
            <person name="Hao B."/>
            <person name="Liu S.-M."/>
            <person name="Wang W."/>
            <person name="Yuan L."/>
            <person name="Cao M."/>
            <person name="McDermott J."/>
            <person name="Samudrala R."/>
            <person name="Wang J."/>
            <person name="Wong G.K.-S."/>
            <person name="Yang H."/>
        </authorList>
    </citation>
    <scope>NUCLEOTIDE SEQUENCE [LARGE SCALE GENOMIC DNA]</scope>
    <source>
        <strain>cv. Nipponbare</strain>
    </source>
</reference>
<reference key="5">
    <citation type="journal article" date="2003" name="Science">
        <title>Collection, mapping, and annotation of over 28,000 cDNA clones from japonica rice.</title>
        <authorList>
            <consortium name="The rice full-length cDNA consortium"/>
        </authorList>
    </citation>
    <scope>NUCLEOTIDE SEQUENCE [LARGE SCALE MRNA] (ISOFORM 2)</scope>
    <source>
        <strain>cv. Nipponbare</strain>
    </source>
</reference>
<reference key="6">
    <citation type="journal article" date="2008" name="BMC Genomics">
        <title>Genome-wide analysis of CCCH zinc finger family in Arabidopsis and rice.</title>
        <authorList>
            <person name="Wang D."/>
            <person name="Guo Y."/>
            <person name="Wu C."/>
            <person name="Yang G."/>
            <person name="Li Y."/>
            <person name="Zheng C."/>
        </authorList>
    </citation>
    <scope>NOMENCLATURE</scope>
</reference>
<sequence length="653" mass="71818">MRCDRCARDTIHPIESRALDRSRILFLLCCYKRRPRFRFHVHQWWWWVAMEVPELVKLAFARVQRVEPEHVGKIFGVMLLREPDEDELVQLAYGPEATLLAKIEDTKAALTVIYARCSAAAAHGPPGGGGVGVGGGGGYHQQPQQLFSRPPVPACGGVRHHYSPAAAAAAAFGYQVQSPQYWPDSPPAPPTKAAQQEFAPPGLVVDASAEGPYPLRGGQHVLDDNNFGGGYYYPAGEDAFPNGGGGGGGSPARARRSNGLSTRRPCHYFSKGICKNGQNCHYSHHQVYQDALAGAAINGDVYNHQPGGVTPGSLETLEMEITELLNSRRGQPVSIASLPTLYGEKYGKGLQADGYLTESQRHGKAGYSLTRLLSRLNKIRVIERPHGQHSVVLAEDAAKYMDFRGGGGGGGGDTGSVPASSHQIYLTFPAESTFAEDDVANYFGQYGPVRDVRIPCQERRMFGFVSFQSPETVSTILMRRNPHFICGSRVLVKPYREKSKCVDRTCVDNIKSMVPYCPPRFFEFDQELYTAEYDASRLMRKQLAEKREMLLEMERRRATVRRLESMPPQFAYFDCSIEDASPLHSLQDDSKQLDLMNPSLASPDPLEIVSNSQAPPTQAGNIYDDHESNQIELLPESPFAASAPAGNSISTII</sequence>
<proteinExistence type="evidence at transcript level"/>
<dbReference type="EMBL" id="AP003886">
    <property type="protein sequence ID" value="BAD08853.1"/>
    <property type="molecule type" value="Genomic_DNA"/>
</dbReference>
<dbReference type="EMBL" id="AP008214">
    <property type="protein sequence ID" value="BAF22813.1"/>
    <property type="molecule type" value="Genomic_DNA"/>
</dbReference>
<dbReference type="EMBL" id="AP014964">
    <property type="protein sequence ID" value="BAT03665.1"/>
    <property type="molecule type" value="Genomic_DNA"/>
</dbReference>
<dbReference type="EMBL" id="CM000145">
    <property type="protein sequence ID" value="EAZ41377.1"/>
    <property type="molecule type" value="Genomic_DNA"/>
</dbReference>
<dbReference type="EMBL" id="AK111902">
    <property type="status" value="NOT_ANNOTATED_CDS"/>
    <property type="molecule type" value="mRNA"/>
</dbReference>
<dbReference type="RefSeq" id="XP_015648182.1">
    <molecule id="Q6ZK57-1"/>
    <property type="nucleotide sequence ID" value="XM_015792696.1"/>
</dbReference>
<dbReference type="RefSeq" id="XP_015648185.1">
    <property type="nucleotide sequence ID" value="XM_015792699.1"/>
</dbReference>
<dbReference type="RefSeq" id="XP_015648186.1">
    <property type="nucleotide sequence ID" value="XM_015792700.1"/>
</dbReference>
<dbReference type="SMR" id="Q6ZK57"/>
<dbReference type="FunCoup" id="Q6ZK57">
    <property type="interactions" value="1356"/>
</dbReference>
<dbReference type="STRING" id="39947.Q6ZK57"/>
<dbReference type="PaxDb" id="39947-Q6ZK57"/>
<dbReference type="GeneID" id="4344566"/>
<dbReference type="KEGG" id="dosa:Os08g0126700"/>
<dbReference type="eggNOG" id="ENOG502QS3A">
    <property type="taxonomic scope" value="Eukaryota"/>
</dbReference>
<dbReference type="InParanoid" id="Q6ZK57"/>
<dbReference type="OrthoDB" id="1914176at2759"/>
<dbReference type="Proteomes" id="UP000000763">
    <property type="component" value="Chromosome 8"/>
</dbReference>
<dbReference type="Proteomes" id="UP000007752">
    <property type="component" value="Chromosome 8"/>
</dbReference>
<dbReference type="Proteomes" id="UP000059680">
    <property type="component" value="Chromosome 8"/>
</dbReference>
<dbReference type="GO" id="GO:0003677">
    <property type="term" value="F:DNA binding"/>
    <property type="evidence" value="ECO:0007669"/>
    <property type="project" value="UniProtKB-KW"/>
</dbReference>
<dbReference type="GO" id="GO:0003723">
    <property type="term" value="F:RNA binding"/>
    <property type="evidence" value="ECO:0007669"/>
    <property type="project" value="UniProtKB-KW"/>
</dbReference>
<dbReference type="GO" id="GO:0008270">
    <property type="term" value="F:zinc ion binding"/>
    <property type="evidence" value="ECO:0007669"/>
    <property type="project" value="UniProtKB-KW"/>
</dbReference>
<dbReference type="CDD" id="cd12458">
    <property type="entry name" value="RRM_AtC3H46_like"/>
    <property type="match status" value="1"/>
</dbReference>
<dbReference type="FunFam" id="3.30.70.330:FF:000678">
    <property type="entry name" value="zinc finger CCCH domain-containing protein 53-like isoform X2"/>
    <property type="match status" value="1"/>
</dbReference>
<dbReference type="Gene3D" id="3.30.70.330">
    <property type="match status" value="1"/>
</dbReference>
<dbReference type="Gene3D" id="1.20.120.1350">
    <property type="entry name" value="Pneumovirus matrix protein 2 (M2), zinc-binding domain"/>
    <property type="match status" value="1"/>
</dbReference>
<dbReference type="InterPro" id="IPR056276">
    <property type="entry name" value="AtC3H46-like_PABC-like"/>
</dbReference>
<dbReference type="InterPro" id="IPR034365">
    <property type="entry name" value="AtC3H46-like_RRM"/>
</dbReference>
<dbReference type="InterPro" id="IPR012677">
    <property type="entry name" value="Nucleotide-bd_a/b_plait_sf"/>
</dbReference>
<dbReference type="InterPro" id="IPR025605">
    <property type="entry name" value="OST-HTH/LOTUS_dom"/>
</dbReference>
<dbReference type="InterPro" id="IPR035979">
    <property type="entry name" value="RBD_domain_sf"/>
</dbReference>
<dbReference type="InterPro" id="IPR000504">
    <property type="entry name" value="RRM_dom"/>
</dbReference>
<dbReference type="InterPro" id="IPR000571">
    <property type="entry name" value="Znf_CCCH"/>
</dbReference>
<dbReference type="InterPro" id="IPR036855">
    <property type="entry name" value="Znf_CCCH_sf"/>
</dbReference>
<dbReference type="PANTHER" id="PTHR24009">
    <property type="entry name" value="RNA-BINDING (RRM/RBD/RNP MOTIFS)"/>
    <property type="match status" value="1"/>
</dbReference>
<dbReference type="PANTHER" id="PTHR24009:SF0">
    <property type="entry name" value="ZINC FINGER CCCH DOMAIN-CONTAINING PROTEIN 18"/>
    <property type="match status" value="1"/>
</dbReference>
<dbReference type="Pfam" id="PF12872">
    <property type="entry name" value="OST-HTH"/>
    <property type="match status" value="1"/>
</dbReference>
<dbReference type="Pfam" id="PF23182">
    <property type="entry name" value="PABC_AtC3H46"/>
    <property type="match status" value="1"/>
</dbReference>
<dbReference type="Pfam" id="PF00076">
    <property type="entry name" value="RRM_1"/>
    <property type="match status" value="1"/>
</dbReference>
<dbReference type="Pfam" id="PF00642">
    <property type="entry name" value="zf-CCCH"/>
    <property type="match status" value="1"/>
</dbReference>
<dbReference type="SMART" id="SM00360">
    <property type="entry name" value="RRM"/>
    <property type="match status" value="1"/>
</dbReference>
<dbReference type="SUPFAM" id="SSF90229">
    <property type="entry name" value="CCCH zinc finger"/>
    <property type="match status" value="1"/>
</dbReference>
<dbReference type="SUPFAM" id="SSF54928">
    <property type="entry name" value="RNA-binding domain, RBD"/>
    <property type="match status" value="1"/>
</dbReference>
<dbReference type="PROSITE" id="PS51644">
    <property type="entry name" value="HTH_OST"/>
    <property type="match status" value="1"/>
</dbReference>
<dbReference type="PROSITE" id="PS50102">
    <property type="entry name" value="RRM"/>
    <property type="match status" value="1"/>
</dbReference>
<dbReference type="PROSITE" id="PS50103">
    <property type="entry name" value="ZF_C3H1"/>
    <property type="match status" value="1"/>
</dbReference>
<gene>
    <name type="ordered locus">Os08g0126700</name>
    <name type="ordered locus">LOC_Os08g03310</name>
    <name type="ORF">OJ1163_G08.18</name>
    <name type="ORF">OsJ_024860</name>
</gene>
<keyword id="KW-0025">Alternative splicing</keyword>
<keyword id="KW-0175">Coiled coil</keyword>
<keyword id="KW-0238">DNA-binding</keyword>
<keyword id="KW-0479">Metal-binding</keyword>
<keyword id="KW-1185">Reference proteome</keyword>
<keyword id="KW-0694">RNA-binding</keyword>
<keyword id="KW-0862">Zinc</keyword>
<keyword id="KW-0863">Zinc-finger</keyword>
<comment type="alternative products">
    <event type="alternative splicing"/>
    <isoform>
        <id>Q6ZK57-1</id>
        <name>1</name>
        <sequence type="displayed"/>
    </isoform>
    <isoform>
        <id>Q6ZK57-2</id>
        <name>2</name>
        <sequence type="described" ref="VSP_035022"/>
    </isoform>
</comment>
<evidence type="ECO:0000255" key="1"/>
<evidence type="ECO:0000255" key="2">
    <source>
        <dbReference type="PROSITE-ProRule" id="PRU00176"/>
    </source>
</evidence>
<evidence type="ECO:0000255" key="3">
    <source>
        <dbReference type="PROSITE-ProRule" id="PRU00723"/>
    </source>
</evidence>
<evidence type="ECO:0000255" key="4">
    <source>
        <dbReference type="PROSITE-ProRule" id="PRU00975"/>
    </source>
</evidence>
<evidence type="ECO:0000256" key="5">
    <source>
        <dbReference type="SAM" id="MobiDB-lite"/>
    </source>
</evidence>
<evidence type="ECO:0000303" key="6">
    <source>
    </source>
</evidence>
<evidence type="ECO:0000305" key="7"/>